<accession>C3K0U6</accession>
<protein>
    <recommendedName>
        <fullName evidence="1">Flagellar hook-basal body complex protein FliE</fullName>
    </recommendedName>
</protein>
<sequence>MSQGIEFNRLMLDMRSMQMDAMAQPKSVAPAPELGQSSFADMLGQAINKVSDTQQASSQLANAFEIGKSGVDLTDVMVASQKASVSFQALTQVRNKLVQAYQDIMQMPV</sequence>
<keyword id="KW-0975">Bacterial flagellum</keyword>
<feature type="chain" id="PRO_1000212725" description="Flagellar hook-basal body complex protein FliE">
    <location>
        <begin position="1"/>
        <end position="109"/>
    </location>
</feature>
<comment type="subcellular location">
    <subcellularLocation>
        <location evidence="1">Bacterial flagellum basal body</location>
    </subcellularLocation>
</comment>
<comment type="similarity">
    <text evidence="1">Belongs to the FliE family.</text>
</comment>
<name>FLIE_PSEFS</name>
<evidence type="ECO:0000255" key="1">
    <source>
        <dbReference type="HAMAP-Rule" id="MF_00724"/>
    </source>
</evidence>
<organism>
    <name type="scientific">Pseudomonas fluorescens (strain SBW25)</name>
    <dbReference type="NCBI Taxonomy" id="216595"/>
    <lineage>
        <taxon>Bacteria</taxon>
        <taxon>Pseudomonadati</taxon>
        <taxon>Pseudomonadota</taxon>
        <taxon>Gammaproteobacteria</taxon>
        <taxon>Pseudomonadales</taxon>
        <taxon>Pseudomonadaceae</taxon>
        <taxon>Pseudomonas</taxon>
    </lineage>
</organism>
<reference key="1">
    <citation type="journal article" date="2009" name="Genome Biol.">
        <title>Genomic and genetic analyses of diversity and plant interactions of Pseudomonas fluorescens.</title>
        <authorList>
            <person name="Silby M.W."/>
            <person name="Cerdeno-Tarraga A.M."/>
            <person name="Vernikos G.S."/>
            <person name="Giddens S.R."/>
            <person name="Jackson R.W."/>
            <person name="Preston G.M."/>
            <person name="Zhang X.-X."/>
            <person name="Moon C.D."/>
            <person name="Gehrig S.M."/>
            <person name="Godfrey S.A.C."/>
            <person name="Knight C.G."/>
            <person name="Malone J.G."/>
            <person name="Robinson Z."/>
            <person name="Spiers A.J."/>
            <person name="Harris S."/>
            <person name="Challis G.L."/>
            <person name="Yaxley A.M."/>
            <person name="Harris D."/>
            <person name="Seeger K."/>
            <person name="Murphy L."/>
            <person name="Rutter S."/>
            <person name="Squares R."/>
            <person name="Quail M.A."/>
            <person name="Saunders E."/>
            <person name="Mavromatis K."/>
            <person name="Brettin T.S."/>
            <person name="Bentley S.D."/>
            <person name="Hothersall J."/>
            <person name="Stephens E."/>
            <person name="Thomas C.M."/>
            <person name="Parkhill J."/>
            <person name="Levy S.B."/>
            <person name="Rainey P.B."/>
            <person name="Thomson N.R."/>
        </authorList>
    </citation>
    <scope>NUCLEOTIDE SEQUENCE [LARGE SCALE GENOMIC DNA]</scope>
    <source>
        <strain>SBW25</strain>
    </source>
</reference>
<dbReference type="EMBL" id="AM181176">
    <property type="protein sequence ID" value="CAY51115.1"/>
    <property type="molecule type" value="Genomic_DNA"/>
</dbReference>
<dbReference type="RefSeq" id="WP_015885194.1">
    <property type="nucleotide sequence ID" value="NC_012660.1"/>
</dbReference>
<dbReference type="SMR" id="C3K0U6"/>
<dbReference type="STRING" id="294.SRM1_01523"/>
<dbReference type="GeneID" id="93466033"/>
<dbReference type="eggNOG" id="COG1677">
    <property type="taxonomic scope" value="Bacteria"/>
</dbReference>
<dbReference type="HOGENOM" id="CLU_147249_0_0_6"/>
<dbReference type="OrthoDB" id="8909229at2"/>
<dbReference type="GO" id="GO:0009425">
    <property type="term" value="C:bacterial-type flagellum basal body"/>
    <property type="evidence" value="ECO:0007669"/>
    <property type="project" value="UniProtKB-SubCell"/>
</dbReference>
<dbReference type="GO" id="GO:0003774">
    <property type="term" value="F:cytoskeletal motor activity"/>
    <property type="evidence" value="ECO:0007669"/>
    <property type="project" value="InterPro"/>
</dbReference>
<dbReference type="GO" id="GO:0005198">
    <property type="term" value="F:structural molecule activity"/>
    <property type="evidence" value="ECO:0007669"/>
    <property type="project" value="InterPro"/>
</dbReference>
<dbReference type="GO" id="GO:0071973">
    <property type="term" value="P:bacterial-type flagellum-dependent cell motility"/>
    <property type="evidence" value="ECO:0007669"/>
    <property type="project" value="InterPro"/>
</dbReference>
<dbReference type="HAMAP" id="MF_00724">
    <property type="entry name" value="FliE"/>
    <property type="match status" value="1"/>
</dbReference>
<dbReference type="InterPro" id="IPR001624">
    <property type="entry name" value="FliE"/>
</dbReference>
<dbReference type="NCBIfam" id="TIGR00205">
    <property type="entry name" value="fliE"/>
    <property type="match status" value="1"/>
</dbReference>
<dbReference type="PANTHER" id="PTHR34653">
    <property type="match status" value="1"/>
</dbReference>
<dbReference type="PANTHER" id="PTHR34653:SF1">
    <property type="entry name" value="FLAGELLAR HOOK-BASAL BODY COMPLEX PROTEIN FLIE"/>
    <property type="match status" value="1"/>
</dbReference>
<dbReference type="Pfam" id="PF02049">
    <property type="entry name" value="FliE"/>
    <property type="match status" value="1"/>
</dbReference>
<dbReference type="PRINTS" id="PR01006">
    <property type="entry name" value="FLGHOOKFLIE"/>
</dbReference>
<gene>
    <name evidence="1" type="primary">fliE</name>
    <name type="ordered locus">PFLU_4440</name>
</gene>
<proteinExistence type="inferred from homology"/>